<evidence type="ECO:0000250" key="1"/>
<evidence type="ECO:0000255" key="2"/>
<evidence type="ECO:0000269" key="3">
    <source>
    </source>
</evidence>
<evidence type="ECO:0000269" key="4">
    <source>
    </source>
</evidence>
<evidence type="ECO:0000305" key="5"/>
<name>LAC3_ARATH</name>
<gene>
    <name type="primary">LAC3</name>
    <name type="ordered locus">At2g30210</name>
    <name type="ORF">T9D9.2</name>
</gene>
<protein>
    <recommendedName>
        <fullName>Laccase-3</fullName>
        <ecNumber>1.10.3.2</ecNumber>
    </recommendedName>
    <alternativeName>
        <fullName>Benzenediol:oxygen oxidoreductase 3</fullName>
    </alternativeName>
    <alternativeName>
        <fullName>Diphenol oxidase 3</fullName>
    </alternativeName>
    <alternativeName>
        <fullName>Urishiol oxidase 3</fullName>
    </alternativeName>
</protein>
<dbReference type="EC" id="1.10.3.2"/>
<dbReference type="EMBL" id="AC002338">
    <property type="protein sequence ID" value="AAC16927.1"/>
    <property type="molecule type" value="Genomic_DNA"/>
</dbReference>
<dbReference type="EMBL" id="AC004165">
    <property type="protein sequence ID" value="AAM14916.1"/>
    <property type="molecule type" value="Genomic_DNA"/>
</dbReference>
<dbReference type="EMBL" id="CP002685">
    <property type="protein sequence ID" value="AEC08358.1"/>
    <property type="molecule type" value="Genomic_DNA"/>
</dbReference>
<dbReference type="EMBL" id="AK221241">
    <property type="protein sequence ID" value="BAD93858.1"/>
    <property type="molecule type" value="mRNA"/>
</dbReference>
<dbReference type="PIR" id="T00579">
    <property type="entry name" value="T00579"/>
</dbReference>
<dbReference type="RefSeq" id="NP_180580.1">
    <property type="nucleotide sequence ID" value="NM_128574.4"/>
</dbReference>
<dbReference type="SMR" id="Q56YT0"/>
<dbReference type="FunCoup" id="Q56YT0">
    <property type="interactions" value="87"/>
</dbReference>
<dbReference type="STRING" id="3702.Q56YT0"/>
<dbReference type="GlyCosmos" id="Q56YT0">
    <property type="glycosylation" value="7 sites, No reported glycans"/>
</dbReference>
<dbReference type="GlyGen" id="Q56YT0">
    <property type="glycosylation" value="9 sites"/>
</dbReference>
<dbReference type="PaxDb" id="3702-AT2G30210.1"/>
<dbReference type="ProteomicsDB" id="250715"/>
<dbReference type="EnsemblPlants" id="AT2G30210.1">
    <property type="protein sequence ID" value="AT2G30210.1"/>
    <property type="gene ID" value="AT2G30210"/>
</dbReference>
<dbReference type="GeneID" id="817571"/>
<dbReference type="Gramene" id="AT2G30210.1">
    <property type="protein sequence ID" value="AT2G30210.1"/>
    <property type="gene ID" value="AT2G30210"/>
</dbReference>
<dbReference type="KEGG" id="ath:AT2G30210"/>
<dbReference type="Araport" id="AT2G30210"/>
<dbReference type="TAIR" id="AT2G30210">
    <property type="gene designation" value="LAC3"/>
</dbReference>
<dbReference type="eggNOG" id="KOG1263">
    <property type="taxonomic scope" value="Eukaryota"/>
</dbReference>
<dbReference type="HOGENOM" id="CLU_006504_6_3_1"/>
<dbReference type="InParanoid" id="Q56YT0"/>
<dbReference type="OMA" id="SQCPIAK"/>
<dbReference type="OrthoDB" id="1025958at2759"/>
<dbReference type="PhylomeDB" id="Q56YT0"/>
<dbReference type="BioCyc" id="ARA:AT2G30210-MONOMER"/>
<dbReference type="PRO" id="PR:Q56YT0"/>
<dbReference type="Proteomes" id="UP000006548">
    <property type="component" value="Chromosome 2"/>
</dbReference>
<dbReference type="ExpressionAtlas" id="Q56YT0">
    <property type="expression patterns" value="baseline and differential"/>
</dbReference>
<dbReference type="GO" id="GO:0048046">
    <property type="term" value="C:apoplast"/>
    <property type="evidence" value="ECO:0007669"/>
    <property type="project" value="UniProtKB-SubCell"/>
</dbReference>
<dbReference type="GO" id="GO:0048226">
    <property type="term" value="C:Casparian strip"/>
    <property type="evidence" value="ECO:0000314"/>
    <property type="project" value="TAIR"/>
</dbReference>
<dbReference type="GO" id="GO:0005507">
    <property type="term" value="F:copper ion binding"/>
    <property type="evidence" value="ECO:0007669"/>
    <property type="project" value="InterPro"/>
</dbReference>
<dbReference type="GO" id="GO:0052716">
    <property type="term" value="F:hydroquinone:oxygen oxidoreductase activity"/>
    <property type="evidence" value="ECO:0007669"/>
    <property type="project" value="UniProtKB-EC"/>
</dbReference>
<dbReference type="GO" id="GO:0046274">
    <property type="term" value="P:lignin catabolic process"/>
    <property type="evidence" value="ECO:0007669"/>
    <property type="project" value="UniProtKB-KW"/>
</dbReference>
<dbReference type="CDD" id="cd13849">
    <property type="entry name" value="CuRO_1_LCC_plant"/>
    <property type="match status" value="1"/>
</dbReference>
<dbReference type="CDD" id="cd13875">
    <property type="entry name" value="CuRO_2_LCC_plant"/>
    <property type="match status" value="1"/>
</dbReference>
<dbReference type="CDD" id="cd13897">
    <property type="entry name" value="CuRO_3_LCC_plant"/>
    <property type="match status" value="1"/>
</dbReference>
<dbReference type="FunFam" id="2.60.40.420:FF:000049">
    <property type="entry name" value="Laccase"/>
    <property type="match status" value="1"/>
</dbReference>
<dbReference type="FunFam" id="2.60.40.420:FF:000062">
    <property type="entry name" value="Laccase"/>
    <property type="match status" value="1"/>
</dbReference>
<dbReference type="Gene3D" id="2.60.40.420">
    <property type="entry name" value="Cupredoxins - blue copper proteins"/>
    <property type="match status" value="3"/>
</dbReference>
<dbReference type="InterPro" id="IPR011707">
    <property type="entry name" value="Cu-oxidase-like_N"/>
</dbReference>
<dbReference type="InterPro" id="IPR001117">
    <property type="entry name" value="Cu-oxidase_2nd"/>
</dbReference>
<dbReference type="InterPro" id="IPR011706">
    <property type="entry name" value="Cu-oxidase_C"/>
</dbReference>
<dbReference type="InterPro" id="IPR045087">
    <property type="entry name" value="Cu-oxidase_fam"/>
</dbReference>
<dbReference type="InterPro" id="IPR033138">
    <property type="entry name" value="Cu_oxidase_CS"/>
</dbReference>
<dbReference type="InterPro" id="IPR002355">
    <property type="entry name" value="Cu_oxidase_Cu_BS"/>
</dbReference>
<dbReference type="InterPro" id="IPR008972">
    <property type="entry name" value="Cupredoxin"/>
</dbReference>
<dbReference type="InterPro" id="IPR034288">
    <property type="entry name" value="CuRO_1_LCC"/>
</dbReference>
<dbReference type="InterPro" id="IPR034285">
    <property type="entry name" value="CuRO_2_LCC"/>
</dbReference>
<dbReference type="InterPro" id="IPR034289">
    <property type="entry name" value="CuRO_3_LCC"/>
</dbReference>
<dbReference type="InterPro" id="IPR017761">
    <property type="entry name" value="Laccase"/>
</dbReference>
<dbReference type="NCBIfam" id="TIGR03389">
    <property type="entry name" value="laccase"/>
    <property type="match status" value="1"/>
</dbReference>
<dbReference type="PANTHER" id="PTHR11709:SF415">
    <property type="entry name" value="LACCASE-3"/>
    <property type="match status" value="1"/>
</dbReference>
<dbReference type="PANTHER" id="PTHR11709">
    <property type="entry name" value="MULTI-COPPER OXIDASE"/>
    <property type="match status" value="1"/>
</dbReference>
<dbReference type="Pfam" id="PF00394">
    <property type="entry name" value="Cu-oxidase"/>
    <property type="match status" value="1"/>
</dbReference>
<dbReference type="Pfam" id="PF07731">
    <property type="entry name" value="Cu-oxidase_2"/>
    <property type="match status" value="1"/>
</dbReference>
<dbReference type="Pfam" id="PF07732">
    <property type="entry name" value="Cu-oxidase_3"/>
    <property type="match status" value="1"/>
</dbReference>
<dbReference type="SUPFAM" id="SSF49503">
    <property type="entry name" value="Cupredoxins"/>
    <property type="match status" value="3"/>
</dbReference>
<dbReference type="PROSITE" id="PS00079">
    <property type="entry name" value="MULTICOPPER_OXIDASE1"/>
    <property type="match status" value="1"/>
</dbReference>
<dbReference type="PROSITE" id="PS00080">
    <property type="entry name" value="MULTICOPPER_OXIDASE2"/>
    <property type="match status" value="1"/>
</dbReference>
<organism>
    <name type="scientific">Arabidopsis thaliana</name>
    <name type="common">Mouse-ear cress</name>
    <dbReference type="NCBI Taxonomy" id="3702"/>
    <lineage>
        <taxon>Eukaryota</taxon>
        <taxon>Viridiplantae</taxon>
        <taxon>Streptophyta</taxon>
        <taxon>Embryophyta</taxon>
        <taxon>Tracheophyta</taxon>
        <taxon>Spermatophyta</taxon>
        <taxon>Magnoliopsida</taxon>
        <taxon>eudicotyledons</taxon>
        <taxon>Gunneridae</taxon>
        <taxon>Pentapetalae</taxon>
        <taxon>rosids</taxon>
        <taxon>malvids</taxon>
        <taxon>Brassicales</taxon>
        <taxon>Brassicaceae</taxon>
        <taxon>Camelineae</taxon>
        <taxon>Arabidopsis</taxon>
    </lineage>
</organism>
<feature type="signal peptide" evidence="2">
    <location>
        <begin position="1"/>
        <end position="25"/>
    </location>
</feature>
<feature type="chain" id="PRO_0000283631" description="Laccase-3">
    <location>
        <begin position="26"/>
        <end position="570"/>
    </location>
</feature>
<feature type="domain" description="Plastocyanin-like 1">
    <location>
        <begin position="33"/>
        <end position="149"/>
    </location>
</feature>
<feature type="domain" description="Plastocyanin-like 2">
    <location>
        <begin position="159"/>
        <end position="310"/>
    </location>
</feature>
<feature type="domain" description="Plastocyanin-like 3">
    <location>
        <begin position="419"/>
        <end position="554"/>
    </location>
</feature>
<feature type="binding site" description="type 2 copper site" evidence="1">
    <location>
        <position position="83"/>
    </location>
    <ligand>
        <name>Cu cation</name>
        <dbReference type="ChEBI" id="CHEBI:23378"/>
        <label>1</label>
    </ligand>
</feature>
<feature type="binding site" description="type 3 copper site" evidence="1">
    <location>
        <position position="85"/>
    </location>
    <ligand>
        <name>Cu cation</name>
        <dbReference type="ChEBI" id="CHEBI:23378"/>
        <label>2</label>
    </ligand>
</feature>
<feature type="binding site" description="type 3 copper site" evidence="1">
    <location>
        <position position="128"/>
    </location>
    <ligand>
        <name>Cu cation</name>
        <dbReference type="ChEBI" id="CHEBI:23378"/>
        <label>2</label>
    </ligand>
</feature>
<feature type="binding site" description="type 3 copper site" evidence="1">
    <location>
        <position position="130"/>
    </location>
    <ligand>
        <name>Cu cation</name>
        <dbReference type="ChEBI" id="CHEBI:23378"/>
        <label>3</label>
    </ligand>
</feature>
<feature type="binding site" description="type 1 copper site" evidence="1">
    <location>
        <position position="471"/>
    </location>
    <ligand>
        <name>Cu cation</name>
        <dbReference type="ChEBI" id="CHEBI:23378"/>
        <label>4</label>
    </ligand>
</feature>
<feature type="binding site" description="type 2 copper site" evidence="1">
    <location>
        <position position="474"/>
    </location>
    <ligand>
        <name>Cu cation</name>
        <dbReference type="ChEBI" id="CHEBI:23378"/>
        <label>1</label>
    </ligand>
</feature>
<feature type="binding site" description="type 3 copper site" evidence="1">
    <location>
        <position position="476"/>
    </location>
    <ligand>
        <name>Cu cation</name>
        <dbReference type="ChEBI" id="CHEBI:23378"/>
        <label>3</label>
    </ligand>
</feature>
<feature type="binding site" description="type 3 copper site" evidence="1">
    <location>
        <position position="533"/>
    </location>
    <ligand>
        <name>Cu cation</name>
        <dbReference type="ChEBI" id="CHEBI:23378"/>
        <label>3</label>
    </ligand>
</feature>
<feature type="binding site" description="type 1 copper site" evidence="1">
    <location>
        <position position="534"/>
    </location>
    <ligand>
        <name>Cu cation</name>
        <dbReference type="ChEBI" id="CHEBI:23378"/>
        <label>4</label>
    </ligand>
</feature>
<feature type="binding site" description="type 3 copper site" evidence="1">
    <location>
        <position position="535"/>
    </location>
    <ligand>
        <name>Cu cation</name>
        <dbReference type="ChEBI" id="CHEBI:23378"/>
        <label>2</label>
    </ligand>
</feature>
<feature type="binding site" description="type 1 copper site" evidence="1">
    <location>
        <position position="539"/>
    </location>
    <ligand>
        <name>Cu cation</name>
        <dbReference type="ChEBI" id="CHEBI:23378"/>
        <label>4</label>
    </ligand>
</feature>
<feature type="glycosylation site" description="N-linked (GlcNAc...) asparagine" evidence="2">
    <location>
        <position position="79"/>
    </location>
</feature>
<feature type="glycosylation site" description="N-linked (GlcNAc...) asparagine" evidence="2">
    <location>
        <position position="188"/>
    </location>
</feature>
<feature type="glycosylation site" description="N-linked (GlcNAc...) asparagine" evidence="2">
    <location>
        <position position="298"/>
    </location>
</feature>
<feature type="glycosylation site" description="N-linked (GlcNAc...) asparagine" evidence="2">
    <location>
        <position position="332"/>
    </location>
</feature>
<feature type="glycosylation site" description="N-linked (GlcNAc...) asparagine" evidence="2">
    <location>
        <position position="383"/>
    </location>
</feature>
<feature type="glycosylation site" description="N-linked (GlcNAc...) asparagine" evidence="2">
    <location>
        <position position="393"/>
    </location>
</feature>
<feature type="glycosylation site" description="N-linked (GlcNAc...) asparagine" evidence="2">
    <location>
        <position position="433"/>
    </location>
</feature>
<comment type="function">
    <text evidence="1">Lignin degradation and detoxification of lignin-derived products.</text>
</comment>
<comment type="catalytic activity">
    <reaction>
        <text>4 hydroquinone + O2 = 4 benzosemiquinone + 2 H2O</text>
        <dbReference type="Rhea" id="RHEA:11276"/>
        <dbReference type="ChEBI" id="CHEBI:15377"/>
        <dbReference type="ChEBI" id="CHEBI:15379"/>
        <dbReference type="ChEBI" id="CHEBI:17594"/>
        <dbReference type="ChEBI" id="CHEBI:17977"/>
        <dbReference type="EC" id="1.10.3.2"/>
    </reaction>
</comment>
<comment type="cofactor">
    <cofactor evidence="1">
        <name>Cu cation</name>
        <dbReference type="ChEBI" id="CHEBI:23378"/>
    </cofactor>
    <text evidence="1">Binds 4 Cu cations per monomer.</text>
</comment>
<comment type="subcellular location">
    <subcellularLocation>
        <location evidence="5">Secreted</location>
        <location evidence="5">Extracellular space</location>
        <location evidence="5">Apoplast</location>
    </subcellularLocation>
</comment>
<comment type="tissue specificity">
    <text evidence="3 4">Mostly expressed in roots and siliques.</text>
</comment>
<comment type="similarity">
    <text evidence="5">Belongs to the multicopper oxidase family.</text>
</comment>
<keyword id="KW-0052">Apoplast</keyword>
<keyword id="KW-0186">Copper</keyword>
<keyword id="KW-0325">Glycoprotein</keyword>
<keyword id="KW-0439">Lignin degradation</keyword>
<keyword id="KW-0479">Metal-binding</keyword>
<keyword id="KW-0560">Oxidoreductase</keyword>
<keyword id="KW-1185">Reference proteome</keyword>
<keyword id="KW-0677">Repeat</keyword>
<keyword id="KW-0964">Secreted</keyword>
<keyword id="KW-0732">Signal</keyword>
<reference key="1">
    <citation type="journal article" date="1999" name="Nature">
        <title>Sequence and analysis of chromosome 2 of the plant Arabidopsis thaliana.</title>
        <authorList>
            <person name="Lin X."/>
            <person name="Kaul S."/>
            <person name="Rounsley S.D."/>
            <person name="Shea T.P."/>
            <person name="Benito M.-I."/>
            <person name="Town C.D."/>
            <person name="Fujii C.Y."/>
            <person name="Mason T.M."/>
            <person name="Bowman C.L."/>
            <person name="Barnstead M.E."/>
            <person name="Feldblyum T.V."/>
            <person name="Buell C.R."/>
            <person name="Ketchum K.A."/>
            <person name="Lee J.J."/>
            <person name="Ronning C.M."/>
            <person name="Koo H.L."/>
            <person name="Moffat K.S."/>
            <person name="Cronin L.A."/>
            <person name="Shen M."/>
            <person name="Pai G."/>
            <person name="Van Aken S."/>
            <person name="Umayam L."/>
            <person name="Tallon L.J."/>
            <person name="Gill J.E."/>
            <person name="Adams M.D."/>
            <person name="Carrera A.J."/>
            <person name="Creasy T.H."/>
            <person name="Goodman H.M."/>
            <person name="Somerville C.R."/>
            <person name="Copenhaver G.P."/>
            <person name="Preuss D."/>
            <person name="Nierman W.C."/>
            <person name="White O."/>
            <person name="Eisen J.A."/>
            <person name="Salzberg S.L."/>
            <person name="Fraser C.M."/>
            <person name="Venter J.C."/>
        </authorList>
    </citation>
    <scope>NUCLEOTIDE SEQUENCE [LARGE SCALE GENOMIC DNA]</scope>
    <source>
        <strain>cv. Columbia</strain>
    </source>
</reference>
<reference key="2">
    <citation type="journal article" date="2017" name="Plant J.">
        <title>Araport11: a complete reannotation of the Arabidopsis thaliana reference genome.</title>
        <authorList>
            <person name="Cheng C.Y."/>
            <person name="Krishnakumar V."/>
            <person name="Chan A.P."/>
            <person name="Thibaud-Nissen F."/>
            <person name="Schobel S."/>
            <person name="Town C.D."/>
        </authorList>
    </citation>
    <scope>GENOME REANNOTATION</scope>
    <source>
        <strain>cv. Columbia</strain>
    </source>
</reference>
<reference key="3">
    <citation type="submission" date="2005-03" db="EMBL/GenBank/DDBJ databases">
        <title>Large-scale analysis of RIKEN Arabidopsis full-length (RAFL) cDNAs.</title>
        <authorList>
            <person name="Totoki Y."/>
            <person name="Seki M."/>
            <person name="Ishida J."/>
            <person name="Nakajima M."/>
            <person name="Enju A."/>
            <person name="Kamiya A."/>
            <person name="Narusaka M."/>
            <person name="Shin-i T."/>
            <person name="Nakagawa M."/>
            <person name="Sakamoto N."/>
            <person name="Oishi K."/>
            <person name="Kohara Y."/>
            <person name="Kobayashi M."/>
            <person name="Toyoda A."/>
            <person name="Sakaki Y."/>
            <person name="Sakurai T."/>
            <person name="Iida K."/>
            <person name="Akiyama K."/>
            <person name="Satou M."/>
            <person name="Toyoda T."/>
            <person name="Konagaya A."/>
            <person name="Carninci P."/>
            <person name="Kawai J."/>
            <person name="Hayashizaki Y."/>
            <person name="Shinozaki K."/>
        </authorList>
    </citation>
    <scope>NUCLEOTIDE SEQUENCE [LARGE SCALE MRNA] OF 391-570</scope>
    <source>
        <strain>cv. Columbia</strain>
    </source>
</reference>
<reference key="4">
    <citation type="journal article" date="2005" name="Planta">
        <title>Gene structure and molecular analysis of the laccase-like multicopper oxidase (LMCO) gene family in Arabidopsis thaliana.</title>
        <authorList>
            <person name="McCaig B.C."/>
            <person name="Meagher R.B."/>
            <person name="Dean J.F.D."/>
        </authorList>
    </citation>
    <scope>TISSUE SPECIFICITY</scope>
</reference>
<reference key="5">
    <citation type="journal article" date="2006" name="J. Exp. Bot.">
        <title>Mutant identification and characterization of the laccase gene family in Arabidopsis.</title>
        <authorList>
            <person name="Cai X."/>
            <person name="Davis E.J."/>
            <person name="Ballif J."/>
            <person name="Liang M."/>
            <person name="Bushman E."/>
            <person name="Haroldsen V."/>
            <person name="Torabinejad J."/>
            <person name="Wu Y."/>
        </authorList>
    </citation>
    <scope>TISSUE SPECIFICITY</scope>
</reference>
<sequence>MESFRRFSLLSFIALLAYFAFLASAEHHVHQFVITPTPVKRLCRTHQSITVNGQYPGPTLVVRNGDSLAITVINRARYNISIHWHGIRQLRNPWADGPEYITQCPIRPGQTYTYRFKIEDQEGTLWWHAHSRWLRATVYGALIIYPRLGSPYPFSMPKRDIPILLGEWWDRNPMDVLKQAQFTGAAANVSDAYTINGQPGDLYRCSRAGTIRFPIFPGETVQLRVINAGMNQELFFSVANHQFTVVETDSAYTKPFTTNVIMIGPGQTTNVLLTANQRPGRYYMAARAYNSANAPFDNTTTTAILQYVNAPTRRGRGRGQIAPVFPVLPGFNDTATATAFTNRLRYWKRAPVPQQVDENLFFTVGLGLINCANPNSPRCQGPNGTRFAASMNNMSFVLPRSNSVMQAYYQGTPGIFTTDFPPVPPVQFDYTGNVSRGLWQPIKGTKAYKLKYKSNVQIVLQDTSIVTPENHPMHLHGYQFYVVGSGFGNFNPRTDPARFNLFDPPERNTIGTPPGGWVAIRFVADNPGAWFMHCHIDSHLGWGLAMVFLVENGRGQLQSVQAPPLDLPRC</sequence>
<accession>Q56YT0</accession>
<accession>O22917</accession>
<proteinExistence type="evidence at transcript level"/>